<reference key="1">
    <citation type="journal article" date="2006" name="Proc. Natl. Acad. Sci. U.S.A.">
        <title>The complete genome sequence of a chronic atrophic gastritis Helicobacter pylori strain: evolution during disease progression.</title>
        <authorList>
            <person name="Oh J.D."/>
            <person name="Kling-Baeckhed H."/>
            <person name="Giannakis M."/>
            <person name="Xu J."/>
            <person name="Fulton R.S."/>
            <person name="Fulton L.A."/>
            <person name="Cordum H.S."/>
            <person name="Wang C."/>
            <person name="Elliott G."/>
            <person name="Edwards J."/>
            <person name="Mardis E.R."/>
            <person name="Engstrand L.G."/>
            <person name="Gordon J.I."/>
        </authorList>
    </citation>
    <scope>NUCLEOTIDE SEQUENCE [LARGE SCALE GENOMIC DNA]</scope>
    <source>
        <strain>HPAG1</strain>
    </source>
</reference>
<organism>
    <name type="scientific">Helicobacter pylori (strain HPAG1)</name>
    <dbReference type="NCBI Taxonomy" id="357544"/>
    <lineage>
        <taxon>Bacteria</taxon>
        <taxon>Pseudomonadati</taxon>
        <taxon>Campylobacterota</taxon>
        <taxon>Epsilonproteobacteria</taxon>
        <taxon>Campylobacterales</taxon>
        <taxon>Helicobacteraceae</taxon>
        <taxon>Helicobacter</taxon>
    </lineage>
</organism>
<accession>Q1CR39</accession>
<dbReference type="EMBL" id="CP000241">
    <property type="protein sequence ID" value="ABF85583.1"/>
    <property type="molecule type" value="Genomic_DNA"/>
</dbReference>
<dbReference type="RefSeq" id="WP_000635389.1">
    <property type="nucleotide sequence ID" value="NC_008086.1"/>
</dbReference>
<dbReference type="SMR" id="Q1CR39"/>
<dbReference type="KEGG" id="hpa:HPAG1_1516"/>
<dbReference type="HOGENOM" id="CLU_033732_3_2_7"/>
<dbReference type="GO" id="GO:0005829">
    <property type="term" value="C:cytosol"/>
    <property type="evidence" value="ECO:0007669"/>
    <property type="project" value="TreeGrafter"/>
</dbReference>
<dbReference type="GO" id="GO:0005525">
    <property type="term" value="F:GTP binding"/>
    <property type="evidence" value="ECO:0007669"/>
    <property type="project" value="UniProtKB-UniRule"/>
</dbReference>
<dbReference type="GO" id="GO:0046872">
    <property type="term" value="F:metal ion binding"/>
    <property type="evidence" value="ECO:0007669"/>
    <property type="project" value="UniProtKB-KW"/>
</dbReference>
<dbReference type="GO" id="GO:0000917">
    <property type="term" value="P:division septum assembly"/>
    <property type="evidence" value="ECO:0007669"/>
    <property type="project" value="UniProtKB-KW"/>
</dbReference>
<dbReference type="CDD" id="cd01876">
    <property type="entry name" value="YihA_EngB"/>
    <property type="match status" value="1"/>
</dbReference>
<dbReference type="FunFam" id="3.40.50.300:FF:002409">
    <property type="entry name" value="Probable GTP-binding protein EngB"/>
    <property type="match status" value="1"/>
</dbReference>
<dbReference type="Gene3D" id="3.40.50.300">
    <property type="entry name" value="P-loop containing nucleotide triphosphate hydrolases"/>
    <property type="match status" value="1"/>
</dbReference>
<dbReference type="HAMAP" id="MF_00321">
    <property type="entry name" value="GTPase_EngB"/>
    <property type="match status" value="1"/>
</dbReference>
<dbReference type="InterPro" id="IPR030393">
    <property type="entry name" value="G_ENGB_dom"/>
</dbReference>
<dbReference type="InterPro" id="IPR006073">
    <property type="entry name" value="GTP-bd"/>
</dbReference>
<dbReference type="InterPro" id="IPR019987">
    <property type="entry name" value="GTP-bd_ribosome_bio_YsxC"/>
</dbReference>
<dbReference type="InterPro" id="IPR027417">
    <property type="entry name" value="P-loop_NTPase"/>
</dbReference>
<dbReference type="NCBIfam" id="TIGR03598">
    <property type="entry name" value="GTPase_YsxC"/>
    <property type="match status" value="1"/>
</dbReference>
<dbReference type="PANTHER" id="PTHR11649:SF13">
    <property type="entry name" value="ENGB-TYPE G DOMAIN-CONTAINING PROTEIN"/>
    <property type="match status" value="1"/>
</dbReference>
<dbReference type="PANTHER" id="PTHR11649">
    <property type="entry name" value="MSS1/TRME-RELATED GTP-BINDING PROTEIN"/>
    <property type="match status" value="1"/>
</dbReference>
<dbReference type="Pfam" id="PF01926">
    <property type="entry name" value="MMR_HSR1"/>
    <property type="match status" value="1"/>
</dbReference>
<dbReference type="SUPFAM" id="SSF52540">
    <property type="entry name" value="P-loop containing nucleoside triphosphate hydrolases"/>
    <property type="match status" value="1"/>
</dbReference>
<dbReference type="PROSITE" id="PS51706">
    <property type="entry name" value="G_ENGB"/>
    <property type="match status" value="1"/>
</dbReference>
<protein>
    <recommendedName>
        <fullName evidence="1">Probable GTP-binding protein EngB</fullName>
    </recommendedName>
</protein>
<evidence type="ECO:0000255" key="1">
    <source>
        <dbReference type="HAMAP-Rule" id="MF_00321"/>
    </source>
</evidence>
<proteinExistence type="inferred from homology"/>
<comment type="function">
    <text evidence="1">Necessary for normal cell division and for the maintenance of normal septation.</text>
</comment>
<comment type="cofactor">
    <cofactor evidence="1">
        <name>Mg(2+)</name>
        <dbReference type="ChEBI" id="CHEBI:18420"/>
    </cofactor>
</comment>
<comment type="similarity">
    <text evidence="1">Belongs to the TRAFAC class TrmE-Era-EngA-EngB-Septin-like GTPase superfamily. EngB GTPase family.</text>
</comment>
<gene>
    <name evidence="1" type="primary">engB</name>
    <name type="ordered locus">HPAG1_1516</name>
</gene>
<sequence>MIVIKDAHFLTSSSQLFQCPASLTSEMVILGRSNVGKSSFINTLLGKNLAKSSATPGKTRLANFFSTTWEDKENALTTTFNVIDLPGFGYAKVSKNLKKEWEGFLWELLSVRVSIKLFIHLVDARHLNLEIDKNAKENIQALLRPDQAYLSLFTKFDKLNKNEQHRLFLNAPKPFLINTTHFNALSSKYPTLEIVRQTLLKYLLTNPL</sequence>
<keyword id="KW-0131">Cell cycle</keyword>
<keyword id="KW-0132">Cell division</keyword>
<keyword id="KW-0342">GTP-binding</keyword>
<keyword id="KW-0460">Magnesium</keyword>
<keyword id="KW-0479">Metal-binding</keyword>
<keyword id="KW-0547">Nucleotide-binding</keyword>
<keyword id="KW-0717">Septation</keyword>
<feature type="chain" id="PRO_0000266875" description="Probable GTP-binding protein EngB">
    <location>
        <begin position="1"/>
        <end position="208"/>
    </location>
</feature>
<feature type="domain" description="EngB-type G" evidence="1">
    <location>
        <begin position="23"/>
        <end position="205"/>
    </location>
</feature>
<feature type="binding site" evidence="1">
    <location>
        <begin position="31"/>
        <end position="38"/>
    </location>
    <ligand>
        <name>GTP</name>
        <dbReference type="ChEBI" id="CHEBI:37565"/>
    </ligand>
</feature>
<feature type="binding site" evidence="1">
    <location>
        <position position="38"/>
    </location>
    <ligand>
        <name>Mg(2+)</name>
        <dbReference type="ChEBI" id="CHEBI:18420"/>
    </ligand>
</feature>
<feature type="binding site" evidence="1">
    <location>
        <begin position="57"/>
        <end position="61"/>
    </location>
    <ligand>
        <name>GTP</name>
        <dbReference type="ChEBI" id="CHEBI:37565"/>
    </ligand>
</feature>
<feature type="binding site" evidence="1">
    <location>
        <position position="59"/>
    </location>
    <ligand>
        <name>Mg(2+)</name>
        <dbReference type="ChEBI" id="CHEBI:18420"/>
    </ligand>
</feature>
<feature type="binding site" evidence="1">
    <location>
        <begin position="84"/>
        <end position="87"/>
    </location>
    <ligand>
        <name>GTP</name>
        <dbReference type="ChEBI" id="CHEBI:37565"/>
    </ligand>
</feature>
<feature type="binding site" evidence="1">
    <location>
        <begin position="154"/>
        <end position="157"/>
    </location>
    <ligand>
        <name>GTP</name>
        <dbReference type="ChEBI" id="CHEBI:37565"/>
    </ligand>
</feature>
<feature type="binding site" evidence="1">
    <location>
        <begin position="182"/>
        <end position="184"/>
    </location>
    <ligand>
        <name>GTP</name>
        <dbReference type="ChEBI" id="CHEBI:37565"/>
    </ligand>
</feature>
<name>ENGB_HELPH</name>